<evidence type="ECO:0000255" key="1">
    <source>
        <dbReference type="HAMAP-Rule" id="MF_00195"/>
    </source>
</evidence>
<reference key="1">
    <citation type="submission" date="2008-10" db="EMBL/GenBank/DDBJ databases">
        <title>Genome sequence of Ureaplasma urealyticum serovar 10 ATCC-33699.</title>
        <authorList>
            <person name="Shrivastava S."/>
            <person name="Methe B.A."/>
            <person name="Glass J."/>
            <person name="White K."/>
            <person name="Duffy L.B."/>
        </authorList>
    </citation>
    <scope>NUCLEOTIDE SEQUENCE [LARGE SCALE GENOMIC DNA]</scope>
    <source>
        <strain>ATCC 33699 / Western</strain>
    </source>
</reference>
<sequence length="442" mass="50401">MRTIAIVGKPNVGKSSLFNRILMRRKSIVDDQPGVTRDRIYDVGNWLTRDFMLIDTGGIISSEDTYQDNINEQVLFAINEANTIIFLVSAKDGINNDDKKIAKMLKEKAKDKKVILVVNKVESEKYYFNEGELYSFGFGKFFKISAEHGIGMGDLLDELVKDMPIQNALDQQERFKFCIIGRPNVGKSSLTNTILGEQRMIVNAEAGSTRDSIDNDFSYHNKKYTIIDTAGVRRKGKIVEAVEKYAVLRTQKAIERSQLILLVLDGSEPFKEQDEVVGGLAYDANIPTIIVVNKWDNIVNKNSHTMEMVKKQIRSQFKYLSWAPIVFISALDNKRIHTIFETIELVREQAMRKVATSLLNDVVIKANAFQEPPPFKGGRISISYVVQVQSQIPTFVLKCNNPKFLHFSYARYIENEIRKAFGFDSVPITLYWQDKNKKLRGE</sequence>
<keyword id="KW-0342">GTP-binding</keyword>
<keyword id="KW-0547">Nucleotide-binding</keyword>
<keyword id="KW-0677">Repeat</keyword>
<keyword id="KW-0690">Ribosome biogenesis</keyword>
<protein>
    <recommendedName>
        <fullName evidence="1">GTPase Der</fullName>
    </recommendedName>
    <alternativeName>
        <fullName evidence="1">GTP-binding protein EngA</fullName>
    </alternativeName>
</protein>
<proteinExistence type="inferred from homology"/>
<accession>B5ZBM9</accession>
<name>DER_UREU1</name>
<gene>
    <name evidence="1" type="primary">der</name>
    <name type="synonym">engA</name>
    <name type="ordered locus">UUR10_0426</name>
</gene>
<dbReference type="EMBL" id="CP001184">
    <property type="protein sequence ID" value="ACI59767.1"/>
    <property type="molecule type" value="Genomic_DNA"/>
</dbReference>
<dbReference type="RefSeq" id="WP_004026718.1">
    <property type="nucleotide sequence ID" value="NC_011374.1"/>
</dbReference>
<dbReference type="SMR" id="B5ZBM9"/>
<dbReference type="STRING" id="565575.UUR10_0426"/>
<dbReference type="KEGG" id="uue:UUR10_0426"/>
<dbReference type="eggNOG" id="COG1160">
    <property type="taxonomic scope" value="Bacteria"/>
</dbReference>
<dbReference type="HOGENOM" id="CLU_016077_6_2_14"/>
<dbReference type="OrthoDB" id="9805918at2"/>
<dbReference type="Proteomes" id="UP000002018">
    <property type="component" value="Chromosome"/>
</dbReference>
<dbReference type="GO" id="GO:0005525">
    <property type="term" value="F:GTP binding"/>
    <property type="evidence" value="ECO:0007669"/>
    <property type="project" value="UniProtKB-UniRule"/>
</dbReference>
<dbReference type="GO" id="GO:0043022">
    <property type="term" value="F:ribosome binding"/>
    <property type="evidence" value="ECO:0007669"/>
    <property type="project" value="TreeGrafter"/>
</dbReference>
<dbReference type="GO" id="GO:0042254">
    <property type="term" value="P:ribosome biogenesis"/>
    <property type="evidence" value="ECO:0007669"/>
    <property type="project" value="UniProtKB-KW"/>
</dbReference>
<dbReference type="CDD" id="cd01894">
    <property type="entry name" value="EngA1"/>
    <property type="match status" value="1"/>
</dbReference>
<dbReference type="CDD" id="cd01895">
    <property type="entry name" value="EngA2"/>
    <property type="match status" value="1"/>
</dbReference>
<dbReference type="FunFam" id="3.30.300.20:FF:000004">
    <property type="entry name" value="GTPase Der"/>
    <property type="match status" value="1"/>
</dbReference>
<dbReference type="FunFam" id="3.40.50.300:FF:000040">
    <property type="entry name" value="GTPase Der"/>
    <property type="match status" value="1"/>
</dbReference>
<dbReference type="FunFam" id="3.40.50.300:FF:000057">
    <property type="entry name" value="GTPase Der"/>
    <property type="match status" value="1"/>
</dbReference>
<dbReference type="Gene3D" id="3.30.300.20">
    <property type="match status" value="1"/>
</dbReference>
<dbReference type="Gene3D" id="3.40.50.300">
    <property type="entry name" value="P-loop containing nucleotide triphosphate hydrolases"/>
    <property type="match status" value="2"/>
</dbReference>
<dbReference type="HAMAP" id="MF_00195">
    <property type="entry name" value="GTPase_Der"/>
    <property type="match status" value="1"/>
</dbReference>
<dbReference type="InterPro" id="IPR031166">
    <property type="entry name" value="G_ENGA"/>
</dbReference>
<dbReference type="InterPro" id="IPR006073">
    <property type="entry name" value="GTP-bd"/>
</dbReference>
<dbReference type="InterPro" id="IPR016484">
    <property type="entry name" value="GTPase_Der"/>
</dbReference>
<dbReference type="InterPro" id="IPR032859">
    <property type="entry name" value="KH_dom-like"/>
</dbReference>
<dbReference type="InterPro" id="IPR015946">
    <property type="entry name" value="KH_dom-like_a/b"/>
</dbReference>
<dbReference type="InterPro" id="IPR027417">
    <property type="entry name" value="P-loop_NTPase"/>
</dbReference>
<dbReference type="InterPro" id="IPR005225">
    <property type="entry name" value="Small_GTP-bd"/>
</dbReference>
<dbReference type="NCBIfam" id="TIGR03594">
    <property type="entry name" value="GTPase_EngA"/>
    <property type="match status" value="1"/>
</dbReference>
<dbReference type="NCBIfam" id="TIGR00231">
    <property type="entry name" value="small_GTP"/>
    <property type="match status" value="2"/>
</dbReference>
<dbReference type="PANTHER" id="PTHR43834">
    <property type="entry name" value="GTPASE DER"/>
    <property type="match status" value="1"/>
</dbReference>
<dbReference type="PANTHER" id="PTHR43834:SF6">
    <property type="entry name" value="GTPASE DER"/>
    <property type="match status" value="1"/>
</dbReference>
<dbReference type="Pfam" id="PF14714">
    <property type="entry name" value="KH_dom-like"/>
    <property type="match status" value="1"/>
</dbReference>
<dbReference type="Pfam" id="PF01926">
    <property type="entry name" value="MMR_HSR1"/>
    <property type="match status" value="2"/>
</dbReference>
<dbReference type="PIRSF" id="PIRSF006485">
    <property type="entry name" value="GTP-binding_EngA"/>
    <property type="match status" value="1"/>
</dbReference>
<dbReference type="PRINTS" id="PR00326">
    <property type="entry name" value="GTP1OBG"/>
</dbReference>
<dbReference type="SUPFAM" id="SSF52540">
    <property type="entry name" value="P-loop containing nucleoside triphosphate hydrolases"/>
    <property type="match status" value="2"/>
</dbReference>
<dbReference type="PROSITE" id="PS51712">
    <property type="entry name" value="G_ENGA"/>
    <property type="match status" value="2"/>
</dbReference>
<organism>
    <name type="scientific">Ureaplasma urealyticum serovar 10 (strain ATCC 33699 / Western)</name>
    <dbReference type="NCBI Taxonomy" id="565575"/>
    <lineage>
        <taxon>Bacteria</taxon>
        <taxon>Bacillati</taxon>
        <taxon>Mycoplasmatota</taxon>
        <taxon>Mycoplasmoidales</taxon>
        <taxon>Mycoplasmoidaceae</taxon>
        <taxon>Ureaplasma</taxon>
    </lineage>
</organism>
<feature type="chain" id="PRO_1000099177" description="GTPase Der">
    <location>
        <begin position="1"/>
        <end position="442"/>
    </location>
</feature>
<feature type="domain" description="EngA-type G 1">
    <location>
        <begin position="2"/>
        <end position="167"/>
    </location>
</feature>
<feature type="domain" description="EngA-type G 2">
    <location>
        <begin position="175"/>
        <end position="351"/>
    </location>
</feature>
<feature type="domain" description="KH-like" evidence="1">
    <location>
        <begin position="352"/>
        <end position="436"/>
    </location>
</feature>
<feature type="binding site" evidence="1">
    <location>
        <begin position="8"/>
        <end position="15"/>
    </location>
    <ligand>
        <name>GTP</name>
        <dbReference type="ChEBI" id="CHEBI:37565"/>
        <label>1</label>
    </ligand>
</feature>
<feature type="binding site" evidence="1">
    <location>
        <begin position="55"/>
        <end position="59"/>
    </location>
    <ligand>
        <name>GTP</name>
        <dbReference type="ChEBI" id="CHEBI:37565"/>
        <label>1</label>
    </ligand>
</feature>
<feature type="binding site" evidence="1">
    <location>
        <begin position="119"/>
        <end position="122"/>
    </location>
    <ligand>
        <name>GTP</name>
        <dbReference type="ChEBI" id="CHEBI:37565"/>
        <label>1</label>
    </ligand>
</feature>
<feature type="binding site" evidence="1">
    <location>
        <begin position="181"/>
        <end position="188"/>
    </location>
    <ligand>
        <name>GTP</name>
        <dbReference type="ChEBI" id="CHEBI:37565"/>
        <label>2</label>
    </ligand>
</feature>
<feature type="binding site" evidence="1">
    <location>
        <begin position="228"/>
        <end position="232"/>
    </location>
    <ligand>
        <name>GTP</name>
        <dbReference type="ChEBI" id="CHEBI:37565"/>
        <label>2</label>
    </ligand>
</feature>
<feature type="binding site" evidence="1">
    <location>
        <begin position="293"/>
        <end position="296"/>
    </location>
    <ligand>
        <name>GTP</name>
        <dbReference type="ChEBI" id="CHEBI:37565"/>
        <label>2</label>
    </ligand>
</feature>
<comment type="function">
    <text evidence="1">GTPase that plays an essential role in the late steps of ribosome biogenesis.</text>
</comment>
<comment type="subunit">
    <text evidence="1">Associates with the 50S ribosomal subunit.</text>
</comment>
<comment type="similarity">
    <text evidence="1">Belongs to the TRAFAC class TrmE-Era-EngA-EngB-Septin-like GTPase superfamily. EngA (Der) GTPase family.</text>
</comment>